<dbReference type="EC" id="1.1.1.103" evidence="1"/>
<dbReference type="EMBL" id="CP000085">
    <property type="protein sequence ID" value="ABC35365.1"/>
    <property type="molecule type" value="Genomic_DNA"/>
</dbReference>
<dbReference type="RefSeq" id="WP_009894498.1">
    <property type="nucleotide sequence ID" value="NZ_CP008785.1"/>
</dbReference>
<dbReference type="PDB" id="5KIA">
    <property type="method" value="X-ray"/>
    <property type="resolution" value="2.10 A"/>
    <property type="chains" value="A=1-343"/>
</dbReference>
<dbReference type="PDBsum" id="5KIA"/>
<dbReference type="SMR" id="Q2T9E1"/>
<dbReference type="GeneID" id="45117513"/>
<dbReference type="KEGG" id="bte:BTH_II0006"/>
<dbReference type="HOGENOM" id="CLU_026673_11_0_4"/>
<dbReference type="UniPathway" id="UPA00046">
    <property type="reaction ID" value="UER00505"/>
</dbReference>
<dbReference type="Proteomes" id="UP000001930">
    <property type="component" value="Chromosome II"/>
</dbReference>
<dbReference type="GO" id="GO:0005737">
    <property type="term" value="C:cytoplasm"/>
    <property type="evidence" value="ECO:0007669"/>
    <property type="project" value="UniProtKB-SubCell"/>
</dbReference>
<dbReference type="GO" id="GO:0008743">
    <property type="term" value="F:L-threonine 3-dehydrogenase activity"/>
    <property type="evidence" value="ECO:0007669"/>
    <property type="project" value="UniProtKB-UniRule"/>
</dbReference>
<dbReference type="GO" id="GO:0008270">
    <property type="term" value="F:zinc ion binding"/>
    <property type="evidence" value="ECO:0007669"/>
    <property type="project" value="UniProtKB-UniRule"/>
</dbReference>
<dbReference type="GO" id="GO:0019518">
    <property type="term" value="P:L-threonine catabolic process to glycine"/>
    <property type="evidence" value="ECO:0007669"/>
    <property type="project" value="UniProtKB-UniPathway"/>
</dbReference>
<dbReference type="Gene3D" id="3.90.180.10">
    <property type="entry name" value="Medium-chain alcohol dehydrogenases, catalytic domain"/>
    <property type="match status" value="1"/>
</dbReference>
<dbReference type="Gene3D" id="3.40.50.720">
    <property type="entry name" value="NAD(P)-binding Rossmann-like Domain"/>
    <property type="match status" value="1"/>
</dbReference>
<dbReference type="HAMAP" id="MF_00627">
    <property type="entry name" value="Thr_dehydrog"/>
    <property type="match status" value="1"/>
</dbReference>
<dbReference type="InterPro" id="IPR013149">
    <property type="entry name" value="ADH-like_C"/>
</dbReference>
<dbReference type="InterPro" id="IPR013154">
    <property type="entry name" value="ADH-like_N"/>
</dbReference>
<dbReference type="InterPro" id="IPR002328">
    <property type="entry name" value="ADH_Zn_CS"/>
</dbReference>
<dbReference type="InterPro" id="IPR011032">
    <property type="entry name" value="GroES-like_sf"/>
</dbReference>
<dbReference type="InterPro" id="IPR004627">
    <property type="entry name" value="L-Threonine_3-DHase"/>
</dbReference>
<dbReference type="InterPro" id="IPR036291">
    <property type="entry name" value="NAD(P)-bd_dom_sf"/>
</dbReference>
<dbReference type="InterPro" id="IPR020843">
    <property type="entry name" value="PKS_ER"/>
</dbReference>
<dbReference type="InterPro" id="IPR050129">
    <property type="entry name" value="Zn_alcohol_dh"/>
</dbReference>
<dbReference type="NCBIfam" id="NF003808">
    <property type="entry name" value="PRK05396.1"/>
    <property type="match status" value="1"/>
</dbReference>
<dbReference type="NCBIfam" id="TIGR00692">
    <property type="entry name" value="tdh"/>
    <property type="match status" value="1"/>
</dbReference>
<dbReference type="PANTHER" id="PTHR43401">
    <property type="entry name" value="L-THREONINE 3-DEHYDROGENASE"/>
    <property type="match status" value="1"/>
</dbReference>
<dbReference type="PANTHER" id="PTHR43401:SF2">
    <property type="entry name" value="L-THREONINE 3-DEHYDROGENASE"/>
    <property type="match status" value="1"/>
</dbReference>
<dbReference type="Pfam" id="PF08240">
    <property type="entry name" value="ADH_N"/>
    <property type="match status" value="1"/>
</dbReference>
<dbReference type="Pfam" id="PF00107">
    <property type="entry name" value="ADH_zinc_N"/>
    <property type="match status" value="1"/>
</dbReference>
<dbReference type="SMART" id="SM00829">
    <property type="entry name" value="PKS_ER"/>
    <property type="match status" value="1"/>
</dbReference>
<dbReference type="SUPFAM" id="SSF50129">
    <property type="entry name" value="GroES-like"/>
    <property type="match status" value="1"/>
</dbReference>
<dbReference type="SUPFAM" id="SSF51735">
    <property type="entry name" value="NAD(P)-binding Rossmann-fold domains"/>
    <property type="match status" value="1"/>
</dbReference>
<dbReference type="PROSITE" id="PS00059">
    <property type="entry name" value="ADH_ZINC"/>
    <property type="match status" value="1"/>
</dbReference>
<comment type="function">
    <text evidence="1">Catalyzes the NAD(+)-dependent oxidation of L-threonine to 2-amino-3-ketobutyrate.</text>
</comment>
<comment type="catalytic activity">
    <reaction evidence="1">
        <text>L-threonine + NAD(+) = (2S)-2-amino-3-oxobutanoate + NADH + H(+)</text>
        <dbReference type="Rhea" id="RHEA:13161"/>
        <dbReference type="ChEBI" id="CHEBI:15378"/>
        <dbReference type="ChEBI" id="CHEBI:57540"/>
        <dbReference type="ChEBI" id="CHEBI:57926"/>
        <dbReference type="ChEBI" id="CHEBI:57945"/>
        <dbReference type="ChEBI" id="CHEBI:78948"/>
        <dbReference type="EC" id="1.1.1.103"/>
    </reaction>
</comment>
<comment type="cofactor">
    <cofactor evidence="1">
        <name>Zn(2+)</name>
        <dbReference type="ChEBI" id="CHEBI:29105"/>
    </cofactor>
    <text evidence="1">Binds 2 Zn(2+) ions per subunit.</text>
</comment>
<comment type="pathway">
    <text evidence="1">Amino-acid degradation; L-threonine degradation via oxydo-reductase pathway; glycine from L-threonine: step 1/2.</text>
</comment>
<comment type="subunit">
    <text evidence="1">Homotetramer.</text>
</comment>
<comment type="subcellular location">
    <subcellularLocation>
        <location evidence="1">Cytoplasm</location>
    </subcellularLocation>
</comment>
<comment type="similarity">
    <text evidence="1">Belongs to the zinc-containing alcohol dehydrogenase family.</text>
</comment>
<organism>
    <name type="scientific">Burkholderia thailandensis (strain ATCC 700388 / DSM 13276 / CCUG 48851 / CIP 106301 / E264)</name>
    <dbReference type="NCBI Taxonomy" id="271848"/>
    <lineage>
        <taxon>Bacteria</taxon>
        <taxon>Pseudomonadati</taxon>
        <taxon>Pseudomonadota</taxon>
        <taxon>Betaproteobacteria</taxon>
        <taxon>Burkholderiales</taxon>
        <taxon>Burkholderiaceae</taxon>
        <taxon>Burkholderia</taxon>
        <taxon>pseudomallei group</taxon>
    </lineage>
</organism>
<evidence type="ECO:0000255" key="1">
    <source>
        <dbReference type="HAMAP-Rule" id="MF_00627"/>
    </source>
</evidence>
<evidence type="ECO:0007829" key="2">
    <source>
        <dbReference type="PDB" id="5KIA"/>
    </source>
</evidence>
<sequence length="343" mass="37431">MKALAKLERGPGLTLTRVKKPEVGHNDVLIKIRRTAICGTDIHIWKWDDWAQKTIPVPMHVGHEYVGEIVEMGQEVRGFSIGDRVSGEGHITCGFCRNCRAGRRHLCRNTVGVGVNREGAFAEYLAIPAFNAFKIPPEISDDLAAIFDPFGNATHTALSFNLVGEDVLITGAGPIGVMAVAIAKHVGARNVVITDINDYRLDLARRMGATRAVNVSRESLRDVMADLHMTEGFDVGLEMSGVPSAFTSLLESMNHGGKVALLGIPPAQTAIDWNQVIFKGLEIKGIYGREMFETWYKMVAMLQSGLDLSPIITHRFAVDDYEKGFAAMLSGESGKVILDWAAA</sequence>
<gene>
    <name evidence="1" type="primary">tdh</name>
    <name type="ordered locus">BTH_II0006</name>
</gene>
<feature type="chain" id="PRO_1000051627" description="L-threonine 3-dehydrogenase">
    <location>
        <begin position="1"/>
        <end position="343"/>
    </location>
</feature>
<feature type="active site" description="Charge relay system" evidence="1">
    <location>
        <position position="40"/>
    </location>
</feature>
<feature type="active site" description="Charge relay system" evidence="1">
    <location>
        <position position="43"/>
    </location>
</feature>
<feature type="binding site" evidence="1">
    <location>
        <position position="38"/>
    </location>
    <ligand>
        <name>Zn(2+)</name>
        <dbReference type="ChEBI" id="CHEBI:29105"/>
        <label>1</label>
        <note>catalytic</note>
    </ligand>
</feature>
<feature type="binding site" evidence="1">
    <location>
        <position position="63"/>
    </location>
    <ligand>
        <name>Zn(2+)</name>
        <dbReference type="ChEBI" id="CHEBI:29105"/>
        <label>1</label>
        <note>catalytic</note>
    </ligand>
</feature>
<feature type="binding site" evidence="1">
    <location>
        <position position="64"/>
    </location>
    <ligand>
        <name>Zn(2+)</name>
        <dbReference type="ChEBI" id="CHEBI:29105"/>
        <label>1</label>
        <note>catalytic</note>
    </ligand>
</feature>
<feature type="binding site" evidence="1">
    <location>
        <position position="93"/>
    </location>
    <ligand>
        <name>Zn(2+)</name>
        <dbReference type="ChEBI" id="CHEBI:29105"/>
        <label>2</label>
    </ligand>
</feature>
<feature type="binding site" evidence="1">
    <location>
        <position position="96"/>
    </location>
    <ligand>
        <name>Zn(2+)</name>
        <dbReference type="ChEBI" id="CHEBI:29105"/>
        <label>2</label>
    </ligand>
</feature>
<feature type="binding site" evidence="1">
    <location>
        <position position="99"/>
    </location>
    <ligand>
        <name>Zn(2+)</name>
        <dbReference type="ChEBI" id="CHEBI:29105"/>
        <label>2</label>
    </ligand>
</feature>
<feature type="binding site" evidence="1">
    <location>
        <position position="107"/>
    </location>
    <ligand>
        <name>Zn(2+)</name>
        <dbReference type="ChEBI" id="CHEBI:29105"/>
        <label>2</label>
    </ligand>
</feature>
<feature type="binding site" evidence="1">
    <location>
        <position position="175"/>
    </location>
    <ligand>
        <name>NAD(+)</name>
        <dbReference type="ChEBI" id="CHEBI:57540"/>
    </ligand>
</feature>
<feature type="binding site" evidence="1">
    <location>
        <position position="195"/>
    </location>
    <ligand>
        <name>NAD(+)</name>
        <dbReference type="ChEBI" id="CHEBI:57540"/>
    </ligand>
</feature>
<feature type="binding site" evidence="1">
    <location>
        <position position="200"/>
    </location>
    <ligand>
        <name>NAD(+)</name>
        <dbReference type="ChEBI" id="CHEBI:57540"/>
    </ligand>
</feature>
<feature type="binding site" evidence="1">
    <location>
        <begin position="262"/>
        <end position="264"/>
    </location>
    <ligand>
        <name>NAD(+)</name>
        <dbReference type="ChEBI" id="CHEBI:57540"/>
    </ligand>
</feature>
<feature type="binding site" evidence="1">
    <location>
        <begin position="286"/>
        <end position="287"/>
    </location>
    <ligand>
        <name>NAD(+)</name>
        <dbReference type="ChEBI" id="CHEBI:57540"/>
    </ligand>
</feature>
<feature type="site" description="Important for catalytic activity for the proton relay mechanism but does not participate directly in the coordination of zinc atom" evidence="1">
    <location>
        <position position="148"/>
    </location>
</feature>
<feature type="strand" evidence="2">
    <location>
        <begin position="1"/>
        <end position="5"/>
    </location>
</feature>
<feature type="strand" evidence="2">
    <location>
        <begin position="14"/>
        <end position="18"/>
    </location>
</feature>
<feature type="strand" evidence="2">
    <location>
        <begin position="27"/>
        <end position="36"/>
    </location>
</feature>
<feature type="helix" evidence="2">
    <location>
        <begin position="39"/>
        <end position="45"/>
    </location>
</feature>
<feature type="helix" evidence="2">
    <location>
        <begin position="51"/>
        <end position="54"/>
    </location>
</feature>
<feature type="strand" evidence="2">
    <location>
        <begin position="64"/>
        <end position="72"/>
    </location>
</feature>
<feature type="strand" evidence="2">
    <location>
        <begin position="84"/>
        <end position="87"/>
    </location>
</feature>
<feature type="strand" evidence="2">
    <location>
        <begin position="89"/>
        <end position="91"/>
    </location>
</feature>
<feature type="helix" evidence="2">
    <location>
        <begin position="97"/>
        <end position="100"/>
    </location>
</feature>
<feature type="helix" evidence="2">
    <location>
        <begin position="104"/>
        <end position="106"/>
    </location>
</feature>
<feature type="turn" evidence="2">
    <location>
        <begin position="113"/>
        <end position="115"/>
    </location>
</feature>
<feature type="strand" evidence="2">
    <location>
        <begin position="120"/>
        <end position="128"/>
    </location>
</feature>
<feature type="helix" evidence="2">
    <location>
        <begin position="129"/>
        <end position="131"/>
    </location>
</feature>
<feature type="strand" evidence="2">
    <location>
        <begin position="132"/>
        <end position="134"/>
    </location>
</feature>
<feature type="helix" evidence="2">
    <location>
        <begin position="141"/>
        <end position="144"/>
    </location>
</feature>
<feature type="helix" evidence="2">
    <location>
        <begin position="147"/>
        <end position="157"/>
    </location>
</feature>
<feature type="strand" evidence="2">
    <location>
        <begin position="167"/>
        <end position="170"/>
    </location>
</feature>
<feature type="helix" evidence="2">
    <location>
        <begin position="174"/>
        <end position="185"/>
    </location>
</feature>
<feature type="strand" evidence="2">
    <location>
        <begin position="191"/>
        <end position="196"/>
    </location>
</feature>
<feature type="helix" evidence="2">
    <location>
        <begin position="198"/>
        <end position="206"/>
    </location>
</feature>
<feature type="strand" evidence="2">
    <location>
        <begin position="210"/>
        <end position="214"/>
    </location>
</feature>
<feature type="turn" evidence="2">
    <location>
        <begin position="215"/>
        <end position="217"/>
    </location>
</feature>
<feature type="helix" evidence="2">
    <location>
        <begin position="220"/>
        <end position="226"/>
    </location>
</feature>
<feature type="strand" evidence="2">
    <location>
        <begin position="233"/>
        <end position="238"/>
    </location>
</feature>
<feature type="helix" evidence="2">
    <location>
        <begin position="243"/>
        <end position="252"/>
    </location>
</feature>
<feature type="strand" evidence="2">
    <location>
        <begin position="253"/>
        <end position="261"/>
    </location>
</feature>
<feature type="helix" evidence="2">
    <location>
        <begin position="273"/>
        <end position="278"/>
    </location>
</feature>
<feature type="strand" evidence="2">
    <location>
        <begin position="282"/>
        <end position="285"/>
    </location>
</feature>
<feature type="helix" evidence="2">
    <location>
        <begin position="292"/>
        <end position="303"/>
    </location>
</feature>
<feature type="helix" evidence="2">
    <location>
        <begin position="309"/>
        <end position="311"/>
    </location>
</feature>
<feature type="strand" evidence="2">
    <location>
        <begin position="312"/>
        <end position="317"/>
    </location>
</feature>
<feature type="helix" evidence="2">
    <location>
        <begin position="318"/>
        <end position="320"/>
    </location>
</feature>
<feature type="helix" evidence="2">
    <location>
        <begin position="321"/>
        <end position="330"/>
    </location>
</feature>
<feature type="strand" evidence="2">
    <location>
        <begin position="334"/>
        <end position="339"/>
    </location>
</feature>
<proteinExistence type="evidence at protein level"/>
<keyword id="KW-0002">3D-structure</keyword>
<keyword id="KW-0963">Cytoplasm</keyword>
<keyword id="KW-0479">Metal-binding</keyword>
<keyword id="KW-0520">NAD</keyword>
<keyword id="KW-0560">Oxidoreductase</keyword>
<keyword id="KW-0862">Zinc</keyword>
<protein>
    <recommendedName>
        <fullName evidence="1">L-threonine 3-dehydrogenase</fullName>
        <shortName evidence="1">TDH</shortName>
        <ecNumber evidence="1">1.1.1.103</ecNumber>
    </recommendedName>
</protein>
<name>TDH_BURTA</name>
<accession>Q2T9E1</accession>
<reference key="1">
    <citation type="journal article" date="2005" name="BMC Genomics">
        <title>Bacterial genome adaptation to niches: divergence of the potential virulence genes in three Burkholderia species of different survival strategies.</title>
        <authorList>
            <person name="Kim H.S."/>
            <person name="Schell M.A."/>
            <person name="Yu Y."/>
            <person name="Ulrich R.L."/>
            <person name="Sarria S.H."/>
            <person name="Nierman W.C."/>
            <person name="DeShazer D."/>
        </authorList>
    </citation>
    <scope>NUCLEOTIDE SEQUENCE [LARGE SCALE GENOMIC DNA]</scope>
    <source>
        <strain>ATCC 700388 / DSM 13276 / CCUG 48851 / CIP 106301 / E264</strain>
    </source>
</reference>